<keyword id="KW-0255">Endonuclease</keyword>
<keyword id="KW-0378">Hydrolase</keyword>
<keyword id="KW-0472">Membrane</keyword>
<keyword id="KW-0479">Metal-binding</keyword>
<keyword id="KW-0496">Mitochondrion</keyword>
<keyword id="KW-0999">Mitochondrion inner membrane</keyword>
<keyword id="KW-0540">Nuclease</keyword>
<keyword id="KW-1185">Reference proteome</keyword>
<keyword id="KW-0809">Transit peptide</keyword>
<feature type="transit peptide" description="Mitochondrion" evidence="2">
    <location>
        <begin position="1"/>
        <end status="unknown"/>
    </location>
</feature>
<feature type="chain" id="PRO_0000342611" description="Nuclease EXOG, mitochondrial">
    <location>
        <begin status="unknown"/>
        <end position="343"/>
    </location>
</feature>
<feature type="active site" description="Proton acceptor" evidence="1">
    <location>
        <position position="121"/>
    </location>
</feature>
<feature type="binding site" evidence="1">
    <location>
        <position position="152"/>
    </location>
    <ligand>
        <name>a divalent metal cation</name>
        <dbReference type="ChEBI" id="CHEBI:60240"/>
        <note>catalytic</note>
    </ligand>
</feature>
<proteinExistence type="evidence at transcript level"/>
<comment type="function">
    <text evidence="1">Endo/exonuclease with nicking activity towards supercoiled DNA, a preference for single-stranded DNA and 5'-3' exonuclease activity.</text>
</comment>
<comment type="cofactor">
    <cofactor evidence="1">
        <name>a divalent metal cation</name>
        <dbReference type="ChEBI" id="CHEBI:60240"/>
    </cofactor>
</comment>
<comment type="subunit">
    <text evidence="1">Homodimer.</text>
</comment>
<comment type="subcellular location">
    <subcellularLocation>
        <location evidence="1">Mitochondrion inner membrane</location>
    </subcellularLocation>
</comment>
<comment type="miscellaneous">
    <text evidence="1">The active site contains 1 hydrated divalent metal cation that has only 1 direct interaction with the protein; all other interactions are via water molecules.</text>
</comment>
<comment type="similarity">
    <text evidence="3">Belongs to the DNA/RNA non-specific endonuclease family.</text>
</comment>
<comment type="sequence caution" evidence="3">
    <conflict type="erroneous initiation">
        <sequence resource="EMBL-CDS" id="AAH95666"/>
    </conflict>
</comment>
<organism>
    <name type="scientific">Danio rerio</name>
    <name type="common">Zebrafish</name>
    <name type="synonym">Brachydanio rerio</name>
    <dbReference type="NCBI Taxonomy" id="7955"/>
    <lineage>
        <taxon>Eukaryota</taxon>
        <taxon>Metazoa</taxon>
        <taxon>Chordata</taxon>
        <taxon>Craniata</taxon>
        <taxon>Vertebrata</taxon>
        <taxon>Euteleostomi</taxon>
        <taxon>Actinopterygii</taxon>
        <taxon>Neopterygii</taxon>
        <taxon>Teleostei</taxon>
        <taxon>Ostariophysi</taxon>
        <taxon>Cypriniformes</taxon>
        <taxon>Danionidae</taxon>
        <taxon>Danioninae</taxon>
        <taxon>Danio</taxon>
    </lineage>
</organism>
<dbReference type="EC" id="3.1.30.-"/>
<dbReference type="EMBL" id="BC095666">
    <property type="protein sequence ID" value="AAH95666.1"/>
    <property type="status" value="ALT_INIT"/>
    <property type="molecule type" value="mRNA"/>
</dbReference>
<dbReference type="SMR" id="Q502K1"/>
<dbReference type="FunCoup" id="Q502K1">
    <property type="interactions" value="143"/>
</dbReference>
<dbReference type="InParanoid" id="Q502K1"/>
<dbReference type="PRO" id="PR:Q502K1"/>
<dbReference type="Proteomes" id="UP000000437">
    <property type="component" value="Unplaced"/>
</dbReference>
<dbReference type="GO" id="GO:0005743">
    <property type="term" value="C:mitochondrial inner membrane"/>
    <property type="evidence" value="ECO:0000318"/>
    <property type="project" value="GO_Central"/>
</dbReference>
<dbReference type="GO" id="GO:0005634">
    <property type="term" value="C:nucleus"/>
    <property type="evidence" value="ECO:0000318"/>
    <property type="project" value="GO_Central"/>
</dbReference>
<dbReference type="GO" id="GO:0008409">
    <property type="term" value="F:5'-3' exonuclease activity"/>
    <property type="evidence" value="ECO:0000318"/>
    <property type="project" value="GO_Central"/>
</dbReference>
<dbReference type="GO" id="GO:0046872">
    <property type="term" value="F:metal ion binding"/>
    <property type="evidence" value="ECO:0007669"/>
    <property type="project" value="UniProtKB-KW"/>
</dbReference>
<dbReference type="GO" id="GO:0003676">
    <property type="term" value="F:nucleic acid binding"/>
    <property type="evidence" value="ECO:0007669"/>
    <property type="project" value="InterPro"/>
</dbReference>
<dbReference type="GO" id="GO:0004521">
    <property type="term" value="F:RNA endonuclease activity"/>
    <property type="evidence" value="ECO:0000318"/>
    <property type="project" value="GO_Central"/>
</dbReference>
<dbReference type="GO" id="GO:0000014">
    <property type="term" value="F:single-stranded DNA endodeoxyribonuclease activity"/>
    <property type="evidence" value="ECO:0000318"/>
    <property type="project" value="GO_Central"/>
</dbReference>
<dbReference type="GO" id="GO:0006309">
    <property type="term" value="P:apoptotic DNA fragmentation"/>
    <property type="evidence" value="ECO:0000318"/>
    <property type="project" value="GO_Central"/>
</dbReference>
<dbReference type="CDD" id="cd00091">
    <property type="entry name" value="NUC"/>
    <property type="match status" value="1"/>
</dbReference>
<dbReference type="FunFam" id="3.40.570.10:FF:000003">
    <property type="entry name" value="Nuclease EXOG, mitochondrial"/>
    <property type="match status" value="1"/>
</dbReference>
<dbReference type="Gene3D" id="6.10.250.1250">
    <property type="match status" value="1"/>
</dbReference>
<dbReference type="Gene3D" id="3.40.570.10">
    <property type="entry name" value="Extracellular Endonuclease, subunit A"/>
    <property type="match status" value="1"/>
</dbReference>
<dbReference type="InterPro" id="IPR044929">
    <property type="entry name" value="DNA/RNA_non-sp_Endonuclease_sf"/>
</dbReference>
<dbReference type="InterPro" id="IPR001604">
    <property type="entry name" value="Endo_G_ENPP1-like_dom"/>
</dbReference>
<dbReference type="InterPro" id="IPR020821">
    <property type="entry name" value="ENPP1-3/EXOG-like_nuc-like"/>
</dbReference>
<dbReference type="InterPro" id="IPR041003">
    <property type="entry name" value="Exog_C"/>
</dbReference>
<dbReference type="InterPro" id="IPR044925">
    <property type="entry name" value="His-Me_finger_sf"/>
</dbReference>
<dbReference type="InterPro" id="IPR040255">
    <property type="entry name" value="Non-specific_endonuclease"/>
</dbReference>
<dbReference type="PANTHER" id="PTHR13966">
    <property type="entry name" value="ENDONUCLEASE RELATED"/>
    <property type="match status" value="1"/>
</dbReference>
<dbReference type="PANTHER" id="PTHR13966:SF19">
    <property type="entry name" value="NUCLEASE EXOG, MITOCHONDRIAL"/>
    <property type="match status" value="1"/>
</dbReference>
<dbReference type="Pfam" id="PF01223">
    <property type="entry name" value="Endonuclease_NS"/>
    <property type="match status" value="1"/>
</dbReference>
<dbReference type="Pfam" id="PF18026">
    <property type="entry name" value="Exog_C"/>
    <property type="match status" value="1"/>
</dbReference>
<dbReference type="SMART" id="SM00892">
    <property type="entry name" value="Endonuclease_NS"/>
    <property type="match status" value="1"/>
</dbReference>
<dbReference type="SMART" id="SM00477">
    <property type="entry name" value="NUC"/>
    <property type="match status" value="1"/>
</dbReference>
<dbReference type="SUPFAM" id="SSF54060">
    <property type="entry name" value="His-Me finger endonucleases"/>
    <property type="match status" value="1"/>
</dbReference>
<protein>
    <recommendedName>
        <fullName>Nuclease EXOG, mitochondrial</fullName>
        <ecNumber>3.1.30.-</ecNumber>
    </recommendedName>
    <alternativeName>
        <fullName>Endonuclease G-like 1</fullName>
        <shortName>Endo G-like 1</shortName>
    </alternativeName>
</protein>
<reference key="1">
    <citation type="submission" date="2005-05" db="EMBL/GenBank/DDBJ databases">
        <authorList>
            <consortium name="NIH - Zebrafish Gene Collection (ZGC) project"/>
        </authorList>
    </citation>
    <scope>NUCLEOTIDE SEQUENCE [LARGE SCALE MRNA]</scope>
    <source>
        <tissue>Ovary</tissue>
    </source>
</reference>
<gene>
    <name type="primary">exog</name>
    <name type="synonym">endogl1</name>
</gene>
<evidence type="ECO:0000250" key="1"/>
<evidence type="ECO:0000255" key="2"/>
<evidence type="ECO:0000305" key="3"/>
<sequence>MMLFSVRFISGFVFGAGSGVAALKLYYYEEQQTHTGSSVHRVIGRFGLPESGAESRFYTNHVLSYDQTHRTPRWVAEHLSSTRLLGEANRKQCKFRPDPSVPELFTAHNEDYLKSGWSRGHMAPAGDNKSSEQAMAETFYLSNIVPQNYENNAGFWNRLEMYCRELTEKFSDVWVVSGPLMKPQITDDGKKTVSYQLIGKDEVAVPTHLYKVILAQKDPSSDALAVGAFVVPNAPIGFQHQLQEFQVSVCDLERESGLVFFPALQKQQLSDLCTVDSCQLMDFRRFSLYISSRKMQSANSVYRLEKILAELQEAGIAPDEHLKQIYQQRRTELERRQDTNTHT</sequence>
<accession>Q502K1</accession>
<name>EXOG_DANRE</name>